<organism>
    <name type="scientific">Bubalus bubalis</name>
    <name type="common">Domestic water buffalo</name>
    <dbReference type="NCBI Taxonomy" id="89462"/>
    <lineage>
        <taxon>Eukaryota</taxon>
        <taxon>Metazoa</taxon>
        <taxon>Chordata</taxon>
        <taxon>Craniata</taxon>
        <taxon>Vertebrata</taxon>
        <taxon>Euteleostomi</taxon>
        <taxon>Mammalia</taxon>
        <taxon>Eutheria</taxon>
        <taxon>Laurasiatheria</taxon>
        <taxon>Artiodactyla</taxon>
        <taxon>Ruminantia</taxon>
        <taxon>Pecora</taxon>
        <taxon>Bovidae</taxon>
        <taxon>Bovinae</taxon>
        <taxon>Bubalus</taxon>
    </lineage>
</organism>
<proteinExistence type="evidence at transcript level"/>
<name>CASA1_BUBBU</name>
<keyword id="KW-0494">Milk protein</keyword>
<keyword id="KW-0597">Phosphoprotein</keyword>
<keyword id="KW-0677">Repeat</keyword>
<keyword id="KW-0964">Secreted</keyword>
<keyword id="KW-0732">Signal</keyword>
<protein>
    <recommendedName>
        <fullName>Alpha-S1-casein</fullName>
    </recommendedName>
</protein>
<sequence length="214" mass="24327">MKLLILTCLVAVALARPKQPIKHQGLPQGVLNENLLRFFVAPFPEVFGKEKVNELSTDIGSESTEDQAMEDIKQMEAESISSSEEIVPISVEQKHIQKEDVPSERYLGYLEQLLRLKKYNVPQLEIVPNLAEEQLHSMKEGIHAQQKEPMIGVNQELAYFYPQLFRQFYQLDAYPSGAWYYVPLGTQYPDAPSFSDIPNPIGSENSGKTTMPLW</sequence>
<accession>O62823</accession>
<reference key="1">
    <citation type="submission" date="1998-10" db="EMBL/GenBank/DDBJ databases">
        <title>cDNA cloning and sequencing of alpha S1-casein in Bubalus bubalis.</title>
        <authorList>
            <person name="Das P."/>
            <person name="Jain S."/>
            <person name="Garg L.C."/>
        </authorList>
    </citation>
    <scope>NUCLEOTIDE SEQUENCE [MRNA]</scope>
    <source>
        <tissue>Mammary gland</tissue>
    </source>
</reference>
<reference key="2">
    <citation type="submission" date="2005-03" db="EMBL/GenBank/DDBJ databases">
        <title>Sequence characterization of alpha S1 casein gene of Indian river buffalo.</title>
        <authorList>
            <person name="Mishra B.P."/>
            <person name="Mukesh M."/>
            <person name="Kataria R.S."/>
            <person name="Ahlawat S.P.S."/>
        </authorList>
    </citation>
    <scope>NUCLEOTIDE SEQUENCE [MRNA]</scope>
    <source>
        <tissue>Mammary gland</tissue>
    </source>
</reference>
<gene>
    <name type="primary">CSN1S1</name>
</gene>
<dbReference type="EMBL" id="AJ005430">
    <property type="protein sequence ID" value="CAA06533.1"/>
    <property type="molecule type" value="mRNA"/>
</dbReference>
<dbReference type="EMBL" id="AY948385">
    <property type="protein sequence ID" value="AAX49507.1"/>
    <property type="molecule type" value="mRNA"/>
</dbReference>
<dbReference type="Allergome" id="1259">
    <property type="allergen name" value="Bub b 8"/>
</dbReference>
<dbReference type="GO" id="GO:0005615">
    <property type="term" value="C:extracellular space"/>
    <property type="evidence" value="ECO:0007669"/>
    <property type="project" value="TreeGrafter"/>
</dbReference>
<dbReference type="GO" id="GO:1903496">
    <property type="term" value="P:response to 11-deoxycorticosterone"/>
    <property type="evidence" value="ECO:0007669"/>
    <property type="project" value="TreeGrafter"/>
</dbReference>
<dbReference type="GO" id="GO:1903494">
    <property type="term" value="P:response to dehydroepiandrosterone"/>
    <property type="evidence" value="ECO:0007669"/>
    <property type="project" value="TreeGrafter"/>
</dbReference>
<dbReference type="GO" id="GO:0032355">
    <property type="term" value="P:response to estradiol"/>
    <property type="evidence" value="ECO:0007669"/>
    <property type="project" value="TreeGrafter"/>
</dbReference>
<dbReference type="GO" id="GO:0032570">
    <property type="term" value="P:response to progesterone"/>
    <property type="evidence" value="ECO:0007669"/>
    <property type="project" value="TreeGrafter"/>
</dbReference>
<dbReference type="InterPro" id="IPR026999">
    <property type="entry name" value="Alpha-s1_casein"/>
</dbReference>
<dbReference type="InterPro" id="IPR001588">
    <property type="entry name" value="Casein"/>
</dbReference>
<dbReference type="InterPro" id="IPR031305">
    <property type="entry name" value="Casein_CS"/>
</dbReference>
<dbReference type="PANTHER" id="PTHR10240">
    <property type="entry name" value="ALPHA-S1-CASEIN"/>
    <property type="match status" value="1"/>
</dbReference>
<dbReference type="PANTHER" id="PTHR10240:SF0">
    <property type="entry name" value="ALPHA-S1-CASEIN"/>
    <property type="match status" value="1"/>
</dbReference>
<dbReference type="Pfam" id="PF00363">
    <property type="entry name" value="Casein"/>
    <property type="match status" value="1"/>
</dbReference>
<dbReference type="PROSITE" id="PS00306">
    <property type="entry name" value="CASEIN_ALPHA_BETA"/>
    <property type="match status" value="1"/>
</dbReference>
<comment type="function">
    <text evidence="1">Important role in the capacity of milk to transport calcium phosphate.</text>
</comment>
<comment type="subcellular location">
    <subcellularLocation>
        <location evidence="1">Secreted</location>
    </subcellularLocation>
</comment>
<comment type="tissue specificity">
    <text>Mammary gland specific. Secreted in milk.</text>
</comment>
<comment type="similarity">
    <text evidence="4">Belongs to the alpha-casein family.</text>
</comment>
<evidence type="ECO:0000250" key="1"/>
<evidence type="ECO:0000250" key="2">
    <source>
        <dbReference type="UniProtKB" id="P02662"/>
    </source>
</evidence>
<evidence type="ECO:0000250" key="3">
    <source>
        <dbReference type="UniProtKB" id="P04653"/>
    </source>
</evidence>
<evidence type="ECO:0000305" key="4"/>
<feature type="signal peptide" evidence="1">
    <location>
        <begin position="1"/>
        <end position="15"/>
    </location>
</feature>
<feature type="chain" id="PRO_0000269038" description="Alpha-S1-casein">
    <location>
        <begin position="16"/>
        <end position="214"/>
    </location>
</feature>
<feature type="repeat">
    <location>
        <begin position="85"/>
        <end position="99"/>
    </location>
</feature>
<feature type="repeat">
    <location>
        <begin position="125"/>
        <end position="140"/>
    </location>
</feature>
<feature type="modified residue" description="Phosphoserine" evidence="2">
    <location>
        <position position="63"/>
    </location>
</feature>
<feature type="modified residue" description="Phosphoserine" evidence="3">
    <location>
        <position position="79"/>
    </location>
</feature>
<feature type="modified residue" description="Phosphoserine" evidence="3">
    <location>
        <position position="81"/>
    </location>
</feature>
<feature type="modified residue" description="Phosphoserine" evidence="2">
    <location>
        <position position="82"/>
    </location>
</feature>
<feature type="modified residue" description="Phosphoserine" evidence="3">
    <location>
        <position position="83"/>
    </location>
</feature>
<feature type="modified residue" description="Phosphoserine" evidence="2">
    <location>
        <position position="90"/>
    </location>
</feature>